<dbReference type="EC" id="2.8.4.4" evidence="1"/>
<dbReference type="EMBL" id="CP000783">
    <property type="protein sequence ID" value="ABU77748.1"/>
    <property type="molecule type" value="Genomic_DNA"/>
</dbReference>
<dbReference type="RefSeq" id="WP_007866226.1">
    <property type="nucleotide sequence ID" value="NC_009778.1"/>
</dbReference>
<dbReference type="SMR" id="A7MF19"/>
<dbReference type="GeneID" id="56731268"/>
<dbReference type="KEGG" id="esa:ESA_02503"/>
<dbReference type="HOGENOM" id="CLU_018697_0_0_6"/>
<dbReference type="Proteomes" id="UP000000260">
    <property type="component" value="Chromosome"/>
</dbReference>
<dbReference type="GO" id="GO:0005829">
    <property type="term" value="C:cytosol"/>
    <property type="evidence" value="ECO:0007669"/>
    <property type="project" value="TreeGrafter"/>
</dbReference>
<dbReference type="GO" id="GO:0051539">
    <property type="term" value="F:4 iron, 4 sulfur cluster binding"/>
    <property type="evidence" value="ECO:0007669"/>
    <property type="project" value="UniProtKB-UniRule"/>
</dbReference>
<dbReference type="GO" id="GO:0035599">
    <property type="term" value="F:aspartic acid methylthiotransferase activity"/>
    <property type="evidence" value="ECO:0007669"/>
    <property type="project" value="TreeGrafter"/>
</dbReference>
<dbReference type="GO" id="GO:0046872">
    <property type="term" value="F:metal ion binding"/>
    <property type="evidence" value="ECO:0007669"/>
    <property type="project" value="UniProtKB-KW"/>
</dbReference>
<dbReference type="GO" id="GO:0103039">
    <property type="term" value="F:protein methylthiotransferase activity"/>
    <property type="evidence" value="ECO:0007669"/>
    <property type="project" value="UniProtKB-EC"/>
</dbReference>
<dbReference type="GO" id="GO:0006400">
    <property type="term" value="P:tRNA modification"/>
    <property type="evidence" value="ECO:0007669"/>
    <property type="project" value="InterPro"/>
</dbReference>
<dbReference type="CDD" id="cd01335">
    <property type="entry name" value="Radical_SAM"/>
    <property type="match status" value="1"/>
</dbReference>
<dbReference type="FunFam" id="2.40.50.140:FF:000060">
    <property type="entry name" value="Ribosomal protein S12 methylthiotransferase RimO"/>
    <property type="match status" value="1"/>
</dbReference>
<dbReference type="FunFam" id="3.40.50.12160:FF:000002">
    <property type="entry name" value="Ribosomal protein S12 methylthiotransferase RimO"/>
    <property type="match status" value="1"/>
</dbReference>
<dbReference type="FunFam" id="3.80.30.20:FF:000001">
    <property type="entry name" value="tRNA-2-methylthio-N(6)-dimethylallyladenosine synthase 2"/>
    <property type="match status" value="1"/>
</dbReference>
<dbReference type="Gene3D" id="3.40.50.12160">
    <property type="entry name" value="Methylthiotransferase, N-terminal domain"/>
    <property type="match status" value="1"/>
</dbReference>
<dbReference type="Gene3D" id="2.40.50.140">
    <property type="entry name" value="Nucleic acid-binding proteins"/>
    <property type="match status" value="1"/>
</dbReference>
<dbReference type="Gene3D" id="3.80.30.20">
    <property type="entry name" value="tm_1862 like domain"/>
    <property type="match status" value="1"/>
</dbReference>
<dbReference type="HAMAP" id="MF_01865">
    <property type="entry name" value="MTTase_RimO"/>
    <property type="match status" value="1"/>
</dbReference>
<dbReference type="InterPro" id="IPR006638">
    <property type="entry name" value="Elp3/MiaA/NifB-like_rSAM"/>
</dbReference>
<dbReference type="InterPro" id="IPR005839">
    <property type="entry name" value="Methylthiotransferase"/>
</dbReference>
<dbReference type="InterPro" id="IPR020612">
    <property type="entry name" value="Methylthiotransferase_CS"/>
</dbReference>
<dbReference type="InterPro" id="IPR013848">
    <property type="entry name" value="Methylthiotransferase_N"/>
</dbReference>
<dbReference type="InterPro" id="IPR038135">
    <property type="entry name" value="Methylthiotransferase_N_sf"/>
</dbReference>
<dbReference type="InterPro" id="IPR012340">
    <property type="entry name" value="NA-bd_OB-fold"/>
</dbReference>
<dbReference type="InterPro" id="IPR005840">
    <property type="entry name" value="Ribosomal_uS12_MeSTrfase_RimO"/>
</dbReference>
<dbReference type="InterPro" id="IPR007197">
    <property type="entry name" value="rSAM"/>
</dbReference>
<dbReference type="InterPro" id="IPR023404">
    <property type="entry name" value="rSAM_horseshoe"/>
</dbReference>
<dbReference type="InterPro" id="IPR002792">
    <property type="entry name" value="TRAM_dom"/>
</dbReference>
<dbReference type="NCBIfam" id="TIGR01125">
    <property type="entry name" value="30S ribosomal protein S12 methylthiotransferase RimO"/>
    <property type="match status" value="1"/>
</dbReference>
<dbReference type="NCBIfam" id="TIGR00089">
    <property type="entry name" value="MiaB/RimO family radical SAM methylthiotransferase"/>
    <property type="match status" value="1"/>
</dbReference>
<dbReference type="PANTHER" id="PTHR43837">
    <property type="entry name" value="RIBOSOMAL PROTEIN S12 METHYLTHIOTRANSFERASE RIMO"/>
    <property type="match status" value="1"/>
</dbReference>
<dbReference type="PANTHER" id="PTHR43837:SF1">
    <property type="entry name" value="RIBOSOMAL PROTEIN US12 METHYLTHIOTRANSFERASE RIMO"/>
    <property type="match status" value="1"/>
</dbReference>
<dbReference type="Pfam" id="PF04055">
    <property type="entry name" value="Radical_SAM"/>
    <property type="match status" value="1"/>
</dbReference>
<dbReference type="Pfam" id="PF18693">
    <property type="entry name" value="TRAM_2"/>
    <property type="match status" value="1"/>
</dbReference>
<dbReference type="Pfam" id="PF00919">
    <property type="entry name" value="UPF0004"/>
    <property type="match status" value="1"/>
</dbReference>
<dbReference type="SFLD" id="SFLDG01082">
    <property type="entry name" value="B12-binding_domain_containing"/>
    <property type="match status" value="1"/>
</dbReference>
<dbReference type="SFLD" id="SFLDG01061">
    <property type="entry name" value="methylthiotransferase"/>
    <property type="match status" value="1"/>
</dbReference>
<dbReference type="SFLD" id="SFLDF00274">
    <property type="entry name" value="ribosomal_protein_S12_methylth"/>
    <property type="match status" value="1"/>
</dbReference>
<dbReference type="SMART" id="SM00729">
    <property type="entry name" value="Elp3"/>
    <property type="match status" value="1"/>
</dbReference>
<dbReference type="SUPFAM" id="SSF102114">
    <property type="entry name" value="Radical SAM enzymes"/>
    <property type="match status" value="1"/>
</dbReference>
<dbReference type="PROSITE" id="PS51449">
    <property type="entry name" value="MTTASE_N"/>
    <property type="match status" value="1"/>
</dbReference>
<dbReference type="PROSITE" id="PS01278">
    <property type="entry name" value="MTTASE_RADICAL"/>
    <property type="match status" value="1"/>
</dbReference>
<dbReference type="PROSITE" id="PS51918">
    <property type="entry name" value="RADICAL_SAM"/>
    <property type="match status" value="1"/>
</dbReference>
<dbReference type="PROSITE" id="PS50926">
    <property type="entry name" value="TRAM"/>
    <property type="match status" value="1"/>
</dbReference>
<comment type="function">
    <text evidence="1">Catalyzes the methylthiolation of an aspartic acid residue of ribosomal protein uS12.</text>
</comment>
<comment type="catalytic activity">
    <reaction evidence="1">
        <text>L-aspartate(89)-[ribosomal protein uS12]-hydrogen + (sulfur carrier)-SH + AH2 + 2 S-adenosyl-L-methionine = 3-methylsulfanyl-L-aspartate(89)-[ribosomal protein uS12]-hydrogen + (sulfur carrier)-H + 5'-deoxyadenosine + L-methionine + A + S-adenosyl-L-homocysteine + 2 H(+)</text>
        <dbReference type="Rhea" id="RHEA:37087"/>
        <dbReference type="Rhea" id="RHEA-COMP:10460"/>
        <dbReference type="Rhea" id="RHEA-COMP:10461"/>
        <dbReference type="Rhea" id="RHEA-COMP:14737"/>
        <dbReference type="Rhea" id="RHEA-COMP:14739"/>
        <dbReference type="ChEBI" id="CHEBI:13193"/>
        <dbReference type="ChEBI" id="CHEBI:15378"/>
        <dbReference type="ChEBI" id="CHEBI:17319"/>
        <dbReference type="ChEBI" id="CHEBI:17499"/>
        <dbReference type="ChEBI" id="CHEBI:29917"/>
        <dbReference type="ChEBI" id="CHEBI:29961"/>
        <dbReference type="ChEBI" id="CHEBI:57844"/>
        <dbReference type="ChEBI" id="CHEBI:57856"/>
        <dbReference type="ChEBI" id="CHEBI:59789"/>
        <dbReference type="ChEBI" id="CHEBI:64428"/>
        <dbReference type="ChEBI" id="CHEBI:73599"/>
        <dbReference type="EC" id="2.8.4.4"/>
    </reaction>
</comment>
<comment type="cofactor">
    <cofactor evidence="1">
        <name>[4Fe-4S] cluster</name>
        <dbReference type="ChEBI" id="CHEBI:49883"/>
    </cofactor>
    <text evidence="1">Binds 2 [4Fe-4S] clusters. One cluster is coordinated with 3 cysteines and an exchangeable S-adenosyl-L-methionine.</text>
</comment>
<comment type="subcellular location">
    <subcellularLocation>
        <location evidence="1">Cytoplasm</location>
    </subcellularLocation>
</comment>
<comment type="similarity">
    <text evidence="1">Belongs to the methylthiotransferase family. RimO subfamily.</text>
</comment>
<evidence type="ECO:0000255" key="1">
    <source>
        <dbReference type="HAMAP-Rule" id="MF_01865"/>
    </source>
</evidence>
<evidence type="ECO:0000255" key="2">
    <source>
        <dbReference type="PROSITE-ProRule" id="PRU01266"/>
    </source>
</evidence>
<name>RIMO_CROS8</name>
<protein>
    <recommendedName>
        <fullName evidence="1">Ribosomal protein uS12 methylthiotransferase RimO</fullName>
        <shortName evidence="1">uS12 MTTase</shortName>
        <shortName evidence="1">uS12 methylthiotransferase</shortName>
        <ecNumber evidence="1">2.8.4.4</ecNumber>
    </recommendedName>
    <alternativeName>
        <fullName evidence="1">Ribosomal protein uS12 (aspartate-C(3))-methylthiotransferase</fullName>
    </alternativeName>
    <alternativeName>
        <fullName evidence="1">Ribosome maturation factor RimO</fullName>
    </alternativeName>
</protein>
<gene>
    <name evidence="1" type="primary">rimO</name>
    <name type="ordered locus">ESA_02503</name>
</gene>
<keyword id="KW-0004">4Fe-4S</keyword>
<keyword id="KW-0963">Cytoplasm</keyword>
<keyword id="KW-0408">Iron</keyword>
<keyword id="KW-0411">Iron-sulfur</keyword>
<keyword id="KW-0479">Metal-binding</keyword>
<keyword id="KW-1185">Reference proteome</keyword>
<keyword id="KW-0949">S-adenosyl-L-methionine</keyword>
<keyword id="KW-0808">Transferase</keyword>
<sequence>MSNVMQQPKIGFVSLGCPKNLVDSERILTELRTEGYDVVPRYDDADMVIVNTCGFIDSAVQESLEAIGEALNENGKVIVTGCLGAKEDQIREVHPKVLEITGPHSYEQVLQHVHHYVPKPKHNPFLSLVPEQGVKLTPRHYAYLKISEGCNHRCTFCIIPSMRGDLDSRPIGDVLAEAKRLVEAGVKELLVISQDTSAYGVDVKHRTGFWNGSPVKTSMVSLCEQLAKLGVWVRLHYVYPYPHVDDVIPLMAEGKILPYLDIPLQHASPRILKLMKRPGSVDRQLARIKQWREICPELTLRSTFIVGFPGETEDDFQMLLDFLKEARLDRVGCFKYSPVEGATANDLPDQVPEEVKEERWNRFMALQQQISAERLQEKVGREILVIIDEVDEEGAIGRSMADAPEIDGAVYLNGETKLKPGDVVRVKVENADEYDLWGSLV</sequence>
<reference key="1">
    <citation type="journal article" date="2010" name="PLoS ONE">
        <title>Genome sequence of Cronobacter sakazakii BAA-894 and comparative genomic hybridization analysis with other Cronobacter species.</title>
        <authorList>
            <person name="Kucerova E."/>
            <person name="Clifton S.W."/>
            <person name="Xia X.Q."/>
            <person name="Long F."/>
            <person name="Porwollik S."/>
            <person name="Fulton L."/>
            <person name="Fronick C."/>
            <person name="Minx P."/>
            <person name="Kyung K."/>
            <person name="Warren W."/>
            <person name="Fulton R."/>
            <person name="Feng D."/>
            <person name="Wollam A."/>
            <person name="Shah N."/>
            <person name="Bhonagiri V."/>
            <person name="Nash W.E."/>
            <person name="Hallsworth-Pepin K."/>
            <person name="Wilson R.K."/>
            <person name="McClelland M."/>
            <person name="Forsythe S.J."/>
        </authorList>
    </citation>
    <scope>NUCLEOTIDE SEQUENCE [LARGE SCALE GENOMIC DNA]</scope>
    <source>
        <strain>ATCC BAA-894</strain>
    </source>
</reference>
<organism>
    <name type="scientific">Cronobacter sakazakii (strain ATCC BAA-894)</name>
    <name type="common">Enterobacter sakazakii</name>
    <dbReference type="NCBI Taxonomy" id="290339"/>
    <lineage>
        <taxon>Bacteria</taxon>
        <taxon>Pseudomonadati</taxon>
        <taxon>Pseudomonadota</taxon>
        <taxon>Gammaproteobacteria</taxon>
        <taxon>Enterobacterales</taxon>
        <taxon>Enterobacteriaceae</taxon>
        <taxon>Cronobacter</taxon>
    </lineage>
</organism>
<feature type="chain" id="PRO_0000374813" description="Ribosomal protein uS12 methylthiotransferase RimO">
    <location>
        <begin position="1"/>
        <end position="441"/>
    </location>
</feature>
<feature type="domain" description="MTTase N-terminal" evidence="1">
    <location>
        <begin position="8"/>
        <end position="118"/>
    </location>
</feature>
<feature type="domain" description="Radical SAM core" evidence="2">
    <location>
        <begin position="136"/>
        <end position="373"/>
    </location>
</feature>
<feature type="domain" description="TRAM" evidence="1">
    <location>
        <begin position="376"/>
        <end position="441"/>
    </location>
</feature>
<feature type="binding site" evidence="1">
    <location>
        <position position="17"/>
    </location>
    <ligand>
        <name>[4Fe-4S] cluster</name>
        <dbReference type="ChEBI" id="CHEBI:49883"/>
        <label>1</label>
    </ligand>
</feature>
<feature type="binding site" evidence="1">
    <location>
        <position position="53"/>
    </location>
    <ligand>
        <name>[4Fe-4S] cluster</name>
        <dbReference type="ChEBI" id="CHEBI:49883"/>
        <label>1</label>
    </ligand>
</feature>
<feature type="binding site" evidence="1">
    <location>
        <position position="82"/>
    </location>
    <ligand>
        <name>[4Fe-4S] cluster</name>
        <dbReference type="ChEBI" id="CHEBI:49883"/>
        <label>1</label>
    </ligand>
</feature>
<feature type="binding site" evidence="1">
    <location>
        <position position="150"/>
    </location>
    <ligand>
        <name>[4Fe-4S] cluster</name>
        <dbReference type="ChEBI" id="CHEBI:49883"/>
        <label>2</label>
        <note>4Fe-4S-S-AdoMet</note>
    </ligand>
</feature>
<feature type="binding site" evidence="1">
    <location>
        <position position="154"/>
    </location>
    <ligand>
        <name>[4Fe-4S] cluster</name>
        <dbReference type="ChEBI" id="CHEBI:49883"/>
        <label>2</label>
        <note>4Fe-4S-S-AdoMet</note>
    </ligand>
</feature>
<feature type="binding site" evidence="1">
    <location>
        <position position="157"/>
    </location>
    <ligand>
        <name>[4Fe-4S] cluster</name>
        <dbReference type="ChEBI" id="CHEBI:49883"/>
        <label>2</label>
        <note>4Fe-4S-S-AdoMet</note>
    </ligand>
</feature>
<proteinExistence type="inferred from homology"/>
<accession>A7MF19</accession>